<comment type="function">
    <text>May be involved in transcriptional regulation.</text>
</comment>
<comment type="subcellular location">
    <subcellularLocation>
        <location evidence="4">Nucleus</location>
    </subcellularLocation>
</comment>
<comment type="similarity">
    <text evidence="4">Belongs to the krueppel C2H2-type zinc-finger protein family.</text>
</comment>
<keyword id="KW-0175">Coiled coil</keyword>
<keyword id="KW-0238">DNA-binding</keyword>
<keyword id="KW-0479">Metal-binding</keyword>
<keyword id="KW-0539">Nucleus</keyword>
<keyword id="KW-1185">Reference proteome</keyword>
<keyword id="KW-0677">Repeat</keyword>
<keyword id="KW-0804">Transcription</keyword>
<keyword id="KW-0805">Transcription regulation</keyword>
<keyword id="KW-0862">Zinc</keyword>
<keyword id="KW-0863">Zinc-finger</keyword>
<evidence type="ECO:0000255" key="1"/>
<evidence type="ECO:0000255" key="2">
    <source>
        <dbReference type="PROSITE-ProRule" id="PRU00042"/>
    </source>
</evidence>
<evidence type="ECO:0000256" key="3">
    <source>
        <dbReference type="SAM" id="MobiDB-lite"/>
    </source>
</evidence>
<evidence type="ECO:0000305" key="4"/>
<sequence length="413" mass="46828">MSRRKQTNPNKVHWDQVFAGLEEQARQAMMKTDFPGDLGSQRQAIQQLRDQDSSSSDSEGDEEETTQDEVSSHTSEEDGGVVKVEKELETAEAPVSSGDALAEREVTENLNSDPLLQLCQCPLCQLDCGSREQLIAHVYQHTAAVVSAKSYMCPVCGRALSSPGSLGRHLLIHSEDQRSNCAVCGARFTSHATFNSEKLPQVLNMESVPQVHSEGPSSAEGKDIACSPPVYPAGILLVCNNCAAYRKLLETQTPSVRKWALRRQNEPLEVRLQRLERERTAKKSRRDNETPEEREVRRMRDREAKRLQRMQETDEQRARRLQRDREAMRLKRANETPEKRQARLIREREAKRLKRRLEKMDMMLRAQFGQDPSAMAALAAEMNFFQLPVSGVELDSQLLGKMAFEEQNNSSLH</sequence>
<feature type="chain" id="PRO_0000317290" description="Zinc finger protein 821">
    <location>
        <begin position="1"/>
        <end position="413"/>
    </location>
</feature>
<feature type="zinc finger region" description="C2H2-type 1" evidence="2">
    <location>
        <begin position="117"/>
        <end position="141"/>
    </location>
</feature>
<feature type="zinc finger region" description="C2H2-type 2" evidence="2">
    <location>
        <begin position="151"/>
        <end position="173"/>
    </location>
</feature>
<feature type="region of interest" description="Disordered" evidence="3">
    <location>
        <begin position="26"/>
        <end position="83"/>
    </location>
</feature>
<feature type="region of interest" description="Disordered" evidence="3">
    <location>
        <begin position="279"/>
        <end position="320"/>
    </location>
</feature>
<feature type="coiled-coil region" evidence="1">
    <location>
        <begin position="260"/>
        <end position="367"/>
    </location>
</feature>
<feature type="compositionally biased region" description="Acidic residues" evidence="3">
    <location>
        <begin position="58"/>
        <end position="67"/>
    </location>
</feature>
<feature type="sequence conflict" description="In Ref. 3; BAE22853." evidence="4" ref="3">
    <original>G</original>
    <variation>V</variation>
    <location>
        <position position="215"/>
    </location>
</feature>
<feature type="sequence conflict" description="In Ref. 2; AAH59014." evidence="4" ref="2">
    <original>R</original>
    <variation>T</variation>
    <location>
        <position position="271"/>
    </location>
</feature>
<name>ZN821_MOUSE</name>
<organism>
    <name type="scientific">Mus musculus</name>
    <name type="common">Mouse</name>
    <dbReference type="NCBI Taxonomy" id="10090"/>
    <lineage>
        <taxon>Eukaryota</taxon>
        <taxon>Metazoa</taxon>
        <taxon>Chordata</taxon>
        <taxon>Craniata</taxon>
        <taxon>Vertebrata</taxon>
        <taxon>Euteleostomi</taxon>
        <taxon>Mammalia</taxon>
        <taxon>Eutheria</taxon>
        <taxon>Euarchontoglires</taxon>
        <taxon>Glires</taxon>
        <taxon>Rodentia</taxon>
        <taxon>Myomorpha</taxon>
        <taxon>Muroidea</taxon>
        <taxon>Muridae</taxon>
        <taxon>Murinae</taxon>
        <taxon>Mus</taxon>
        <taxon>Mus</taxon>
    </lineage>
</organism>
<gene>
    <name type="primary">Znf821</name>
    <name type="synonym">Zfp821</name>
</gene>
<reference key="1">
    <citation type="journal article" date="2009" name="PLoS Biol.">
        <title>Lineage-specific biology revealed by a finished genome assembly of the mouse.</title>
        <authorList>
            <person name="Church D.M."/>
            <person name="Goodstadt L."/>
            <person name="Hillier L.W."/>
            <person name="Zody M.C."/>
            <person name="Goldstein S."/>
            <person name="She X."/>
            <person name="Bult C.J."/>
            <person name="Agarwala R."/>
            <person name="Cherry J.L."/>
            <person name="DiCuccio M."/>
            <person name="Hlavina W."/>
            <person name="Kapustin Y."/>
            <person name="Meric P."/>
            <person name="Maglott D."/>
            <person name="Birtle Z."/>
            <person name="Marques A.C."/>
            <person name="Graves T."/>
            <person name="Zhou S."/>
            <person name="Teague B."/>
            <person name="Potamousis K."/>
            <person name="Churas C."/>
            <person name="Place M."/>
            <person name="Herschleb J."/>
            <person name="Runnheim R."/>
            <person name="Forrest D."/>
            <person name="Amos-Landgraf J."/>
            <person name="Schwartz D.C."/>
            <person name="Cheng Z."/>
            <person name="Lindblad-Toh K."/>
            <person name="Eichler E.E."/>
            <person name="Ponting C.P."/>
        </authorList>
    </citation>
    <scope>NUCLEOTIDE SEQUENCE [LARGE SCALE GENOMIC DNA]</scope>
    <source>
        <strain>C57BL/6J</strain>
    </source>
</reference>
<reference key="2">
    <citation type="journal article" date="2004" name="Genome Res.">
        <title>The status, quality, and expansion of the NIH full-length cDNA project: the Mammalian Gene Collection (MGC).</title>
        <authorList>
            <consortium name="The MGC Project Team"/>
        </authorList>
    </citation>
    <scope>NUCLEOTIDE SEQUENCE [LARGE SCALE MRNA]</scope>
    <source>
        <strain>C57BL/6J</strain>
        <tissue>Brain</tissue>
    </source>
</reference>
<reference key="3">
    <citation type="journal article" date="2005" name="Science">
        <title>The transcriptional landscape of the mammalian genome.</title>
        <authorList>
            <person name="Carninci P."/>
            <person name="Kasukawa T."/>
            <person name="Katayama S."/>
            <person name="Gough J."/>
            <person name="Frith M.C."/>
            <person name="Maeda N."/>
            <person name="Oyama R."/>
            <person name="Ravasi T."/>
            <person name="Lenhard B."/>
            <person name="Wells C."/>
            <person name="Kodzius R."/>
            <person name="Shimokawa K."/>
            <person name="Bajic V.B."/>
            <person name="Brenner S.E."/>
            <person name="Batalov S."/>
            <person name="Forrest A.R."/>
            <person name="Zavolan M."/>
            <person name="Davis M.J."/>
            <person name="Wilming L.G."/>
            <person name="Aidinis V."/>
            <person name="Allen J.E."/>
            <person name="Ambesi-Impiombato A."/>
            <person name="Apweiler R."/>
            <person name="Aturaliya R.N."/>
            <person name="Bailey T.L."/>
            <person name="Bansal M."/>
            <person name="Baxter L."/>
            <person name="Beisel K.W."/>
            <person name="Bersano T."/>
            <person name="Bono H."/>
            <person name="Chalk A.M."/>
            <person name="Chiu K.P."/>
            <person name="Choudhary V."/>
            <person name="Christoffels A."/>
            <person name="Clutterbuck D.R."/>
            <person name="Crowe M.L."/>
            <person name="Dalla E."/>
            <person name="Dalrymple B.P."/>
            <person name="de Bono B."/>
            <person name="Della Gatta G."/>
            <person name="di Bernardo D."/>
            <person name="Down T."/>
            <person name="Engstrom P."/>
            <person name="Fagiolini M."/>
            <person name="Faulkner G."/>
            <person name="Fletcher C.F."/>
            <person name="Fukushima T."/>
            <person name="Furuno M."/>
            <person name="Futaki S."/>
            <person name="Gariboldi M."/>
            <person name="Georgii-Hemming P."/>
            <person name="Gingeras T.R."/>
            <person name="Gojobori T."/>
            <person name="Green R.E."/>
            <person name="Gustincich S."/>
            <person name="Harbers M."/>
            <person name="Hayashi Y."/>
            <person name="Hensch T.K."/>
            <person name="Hirokawa N."/>
            <person name="Hill D."/>
            <person name="Huminiecki L."/>
            <person name="Iacono M."/>
            <person name="Ikeo K."/>
            <person name="Iwama A."/>
            <person name="Ishikawa T."/>
            <person name="Jakt M."/>
            <person name="Kanapin A."/>
            <person name="Katoh M."/>
            <person name="Kawasawa Y."/>
            <person name="Kelso J."/>
            <person name="Kitamura H."/>
            <person name="Kitano H."/>
            <person name="Kollias G."/>
            <person name="Krishnan S.P."/>
            <person name="Kruger A."/>
            <person name="Kummerfeld S.K."/>
            <person name="Kurochkin I.V."/>
            <person name="Lareau L.F."/>
            <person name="Lazarevic D."/>
            <person name="Lipovich L."/>
            <person name="Liu J."/>
            <person name="Liuni S."/>
            <person name="McWilliam S."/>
            <person name="Madan Babu M."/>
            <person name="Madera M."/>
            <person name="Marchionni L."/>
            <person name="Matsuda H."/>
            <person name="Matsuzawa S."/>
            <person name="Miki H."/>
            <person name="Mignone F."/>
            <person name="Miyake S."/>
            <person name="Morris K."/>
            <person name="Mottagui-Tabar S."/>
            <person name="Mulder N."/>
            <person name="Nakano N."/>
            <person name="Nakauchi H."/>
            <person name="Ng P."/>
            <person name="Nilsson R."/>
            <person name="Nishiguchi S."/>
            <person name="Nishikawa S."/>
            <person name="Nori F."/>
            <person name="Ohara O."/>
            <person name="Okazaki Y."/>
            <person name="Orlando V."/>
            <person name="Pang K.C."/>
            <person name="Pavan W.J."/>
            <person name="Pavesi G."/>
            <person name="Pesole G."/>
            <person name="Petrovsky N."/>
            <person name="Piazza S."/>
            <person name="Reed J."/>
            <person name="Reid J.F."/>
            <person name="Ring B.Z."/>
            <person name="Ringwald M."/>
            <person name="Rost B."/>
            <person name="Ruan Y."/>
            <person name="Salzberg S.L."/>
            <person name="Sandelin A."/>
            <person name="Schneider C."/>
            <person name="Schoenbach C."/>
            <person name="Sekiguchi K."/>
            <person name="Semple C.A."/>
            <person name="Seno S."/>
            <person name="Sessa L."/>
            <person name="Sheng Y."/>
            <person name="Shibata Y."/>
            <person name="Shimada H."/>
            <person name="Shimada K."/>
            <person name="Silva D."/>
            <person name="Sinclair B."/>
            <person name="Sperling S."/>
            <person name="Stupka E."/>
            <person name="Sugiura K."/>
            <person name="Sultana R."/>
            <person name="Takenaka Y."/>
            <person name="Taki K."/>
            <person name="Tammoja K."/>
            <person name="Tan S.L."/>
            <person name="Tang S."/>
            <person name="Taylor M.S."/>
            <person name="Tegner J."/>
            <person name="Teichmann S.A."/>
            <person name="Ueda H.R."/>
            <person name="van Nimwegen E."/>
            <person name="Verardo R."/>
            <person name="Wei C.L."/>
            <person name="Yagi K."/>
            <person name="Yamanishi H."/>
            <person name="Zabarovsky E."/>
            <person name="Zhu S."/>
            <person name="Zimmer A."/>
            <person name="Hide W."/>
            <person name="Bult C."/>
            <person name="Grimmond S.M."/>
            <person name="Teasdale R.D."/>
            <person name="Liu E.T."/>
            <person name="Brusic V."/>
            <person name="Quackenbush J."/>
            <person name="Wahlestedt C."/>
            <person name="Mattick J.S."/>
            <person name="Hume D.A."/>
            <person name="Kai C."/>
            <person name="Sasaki D."/>
            <person name="Tomaru Y."/>
            <person name="Fukuda S."/>
            <person name="Kanamori-Katayama M."/>
            <person name="Suzuki M."/>
            <person name="Aoki J."/>
            <person name="Arakawa T."/>
            <person name="Iida J."/>
            <person name="Imamura K."/>
            <person name="Itoh M."/>
            <person name="Kato T."/>
            <person name="Kawaji H."/>
            <person name="Kawagashira N."/>
            <person name="Kawashima T."/>
            <person name="Kojima M."/>
            <person name="Kondo S."/>
            <person name="Konno H."/>
            <person name="Nakano K."/>
            <person name="Ninomiya N."/>
            <person name="Nishio T."/>
            <person name="Okada M."/>
            <person name="Plessy C."/>
            <person name="Shibata K."/>
            <person name="Shiraki T."/>
            <person name="Suzuki S."/>
            <person name="Tagami M."/>
            <person name="Waki K."/>
            <person name="Watahiki A."/>
            <person name="Okamura-Oho Y."/>
            <person name="Suzuki H."/>
            <person name="Kawai J."/>
            <person name="Hayashizaki Y."/>
        </authorList>
    </citation>
    <scope>NUCLEOTIDE SEQUENCE [LARGE SCALE MRNA] OF 1-404</scope>
    <source>
        <strain>C57BL/6J</strain>
    </source>
</reference>
<proteinExistence type="evidence at transcript level"/>
<accession>Q6PD05</accession>
<accession>E9Q0F1</accession>
<accession>Q3UWR1</accession>
<protein>
    <recommendedName>
        <fullName>Zinc finger protein 821</fullName>
    </recommendedName>
</protein>
<dbReference type="EMBL" id="AC132138">
    <property type="status" value="NOT_ANNOTATED_CDS"/>
    <property type="molecule type" value="Genomic_DNA"/>
</dbReference>
<dbReference type="EMBL" id="BC059014">
    <property type="protein sequence ID" value="AAH59014.1"/>
    <property type="molecule type" value="mRNA"/>
</dbReference>
<dbReference type="EMBL" id="AK136168">
    <property type="protein sequence ID" value="BAE22853.1"/>
    <property type="molecule type" value="mRNA"/>
</dbReference>
<dbReference type="CCDS" id="CCDS40473.1"/>
<dbReference type="RefSeq" id="NP_001161418.1">
    <property type="nucleotide sequence ID" value="NM_001167946.2"/>
</dbReference>
<dbReference type="RefSeq" id="NP_001273322.1">
    <property type="nucleotide sequence ID" value="NM_001286393.1"/>
</dbReference>
<dbReference type="RefSeq" id="NP_083744.2">
    <property type="nucleotide sequence ID" value="NM_029468.3"/>
</dbReference>
<dbReference type="RefSeq" id="XP_011246835.1">
    <property type="nucleotide sequence ID" value="XM_011248533.2"/>
</dbReference>
<dbReference type="RefSeq" id="XP_011246836.1">
    <property type="nucleotide sequence ID" value="XM_011248534.2"/>
</dbReference>
<dbReference type="RefSeq" id="XP_011246837.1">
    <property type="nucleotide sequence ID" value="XM_011248535.1"/>
</dbReference>
<dbReference type="RefSeq" id="XP_011246838.1">
    <property type="nucleotide sequence ID" value="XM_011248536.2"/>
</dbReference>
<dbReference type="RefSeq" id="XP_017168486.1">
    <property type="nucleotide sequence ID" value="XM_017312997.1"/>
</dbReference>
<dbReference type="SMR" id="Q6PD05"/>
<dbReference type="BioGRID" id="217810">
    <property type="interactions" value="1"/>
</dbReference>
<dbReference type="FunCoup" id="Q6PD05">
    <property type="interactions" value="1514"/>
</dbReference>
<dbReference type="STRING" id="10090.ENSMUSP00000034163"/>
<dbReference type="iPTMnet" id="Q6PD05"/>
<dbReference type="PhosphoSitePlus" id="Q6PD05"/>
<dbReference type="PaxDb" id="10090-ENSMUSP00000034163"/>
<dbReference type="ProteomicsDB" id="275036"/>
<dbReference type="Antibodypedia" id="16662">
    <property type="antibodies" value="88 antibodies from 21 providers"/>
</dbReference>
<dbReference type="DNASU" id="75871"/>
<dbReference type="Ensembl" id="ENSMUST00000034163.9">
    <property type="protein sequence ID" value="ENSMUSP00000034163.9"/>
    <property type="gene ID" value="ENSMUSG00000031728.11"/>
</dbReference>
<dbReference type="Ensembl" id="ENSMUST00000212000.2">
    <property type="protein sequence ID" value="ENSMUSP00000148348.2"/>
    <property type="gene ID" value="ENSMUSG00000031728.11"/>
</dbReference>
<dbReference type="GeneID" id="75871"/>
<dbReference type="KEGG" id="mmu:75871"/>
<dbReference type="UCSC" id="uc009njb.1">
    <property type="organism name" value="mouse"/>
</dbReference>
<dbReference type="AGR" id="MGI:1923121"/>
<dbReference type="CTD" id="75871"/>
<dbReference type="MGI" id="MGI:1923121">
    <property type="gene designation" value="Zfp821"/>
</dbReference>
<dbReference type="VEuPathDB" id="HostDB:ENSMUSG00000031728"/>
<dbReference type="eggNOG" id="KOG1721">
    <property type="taxonomic scope" value="Eukaryota"/>
</dbReference>
<dbReference type="GeneTree" id="ENSGT00940000159421"/>
<dbReference type="HOGENOM" id="CLU_048218_0_0_1"/>
<dbReference type="InParanoid" id="Q6PD05"/>
<dbReference type="OMA" id="NNCVAYR"/>
<dbReference type="OrthoDB" id="9898763at2759"/>
<dbReference type="PhylomeDB" id="Q6PD05"/>
<dbReference type="TreeFam" id="TF326851"/>
<dbReference type="BioGRID-ORCS" id="75871">
    <property type="hits" value="1 hit in 76 CRISPR screens"/>
</dbReference>
<dbReference type="ChiTaRS" id="Zfp821">
    <property type="organism name" value="mouse"/>
</dbReference>
<dbReference type="PRO" id="PR:Q6PD05"/>
<dbReference type="Proteomes" id="UP000000589">
    <property type="component" value="Chromosome 8"/>
</dbReference>
<dbReference type="RNAct" id="Q6PD05">
    <property type="molecule type" value="protein"/>
</dbReference>
<dbReference type="Bgee" id="ENSMUSG00000031728">
    <property type="expression patterns" value="Expressed in saccule of membranous labyrinth and 188 other cell types or tissues"/>
</dbReference>
<dbReference type="ExpressionAtlas" id="Q6PD05">
    <property type="expression patterns" value="baseline and differential"/>
</dbReference>
<dbReference type="GO" id="GO:0005634">
    <property type="term" value="C:nucleus"/>
    <property type="evidence" value="ECO:0007669"/>
    <property type="project" value="UniProtKB-SubCell"/>
</dbReference>
<dbReference type="GO" id="GO:1990837">
    <property type="term" value="F:sequence-specific double-stranded DNA binding"/>
    <property type="evidence" value="ECO:0007669"/>
    <property type="project" value="Ensembl"/>
</dbReference>
<dbReference type="GO" id="GO:0008270">
    <property type="term" value="F:zinc ion binding"/>
    <property type="evidence" value="ECO:0007669"/>
    <property type="project" value="UniProtKB-KW"/>
</dbReference>
<dbReference type="FunFam" id="3.30.160.60:FF:000582">
    <property type="entry name" value="zinc finger protein 821 isoform X1"/>
    <property type="match status" value="1"/>
</dbReference>
<dbReference type="Gene3D" id="3.30.160.60">
    <property type="entry name" value="Classic Zinc Finger"/>
    <property type="match status" value="1"/>
</dbReference>
<dbReference type="InterPro" id="IPR036236">
    <property type="entry name" value="Znf_C2H2_sf"/>
</dbReference>
<dbReference type="InterPro" id="IPR013087">
    <property type="entry name" value="Znf_C2H2_type"/>
</dbReference>
<dbReference type="PANTHER" id="PTHR24399:SF23">
    <property type="entry name" value="C2H2-TYPE DOMAIN-CONTAINING PROTEIN"/>
    <property type="match status" value="1"/>
</dbReference>
<dbReference type="PANTHER" id="PTHR24399">
    <property type="entry name" value="ZINC FINGER AND BTB DOMAIN-CONTAINING"/>
    <property type="match status" value="1"/>
</dbReference>
<dbReference type="SMART" id="SM00355">
    <property type="entry name" value="ZnF_C2H2"/>
    <property type="match status" value="2"/>
</dbReference>
<dbReference type="SUPFAM" id="SSF57667">
    <property type="entry name" value="beta-beta-alpha zinc fingers"/>
    <property type="match status" value="1"/>
</dbReference>
<dbReference type="PROSITE" id="PS00028">
    <property type="entry name" value="ZINC_FINGER_C2H2_1"/>
    <property type="match status" value="2"/>
</dbReference>
<dbReference type="PROSITE" id="PS50157">
    <property type="entry name" value="ZINC_FINGER_C2H2_2"/>
    <property type="match status" value="1"/>
</dbReference>